<name>GCST_XYLFA</name>
<comment type="function">
    <text evidence="1">The glycine cleavage system catalyzes the degradation of glycine.</text>
</comment>
<comment type="catalytic activity">
    <reaction evidence="1">
        <text>N(6)-[(R)-S(8)-aminomethyldihydrolipoyl]-L-lysyl-[protein] + (6S)-5,6,7,8-tetrahydrofolate = N(6)-[(R)-dihydrolipoyl]-L-lysyl-[protein] + (6R)-5,10-methylene-5,6,7,8-tetrahydrofolate + NH4(+)</text>
        <dbReference type="Rhea" id="RHEA:16945"/>
        <dbReference type="Rhea" id="RHEA-COMP:10475"/>
        <dbReference type="Rhea" id="RHEA-COMP:10492"/>
        <dbReference type="ChEBI" id="CHEBI:15636"/>
        <dbReference type="ChEBI" id="CHEBI:28938"/>
        <dbReference type="ChEBI" id="CHEBI:57453"/>
        <dbReference type="ChEBI" id="CHEBI:83100"/>
        <dbReference type="ChEBI" id="CHEBI:83143"/>
        <dbReference type="EC" id="2.1.2.10"/>
    </reaction>
</comment>
<comment type="subunit">
    <text evidence="1">The glycine cleavage system is composed of four proteins: P, T, L and H.</text>
</comment>
<comment type="similarity">
    <text evidence="1">Belongs to the GcvT family.</text>
</comment>
<dbReference type="EC" id="2.1.2.10" evidence="1"/>
<dbReference type="EMBL" id="AE003849">
    <property type="protein sequence ID" value="AAF82996.1"/>
    <property type="molecule type" value="Genomic_DNA"/>
</dbReference>
<dbReference type="PIR" id="G82837">
    <property type="entry name" value="G82837"/>
</dbReference>
<dbReference type="RefSeq" id="WP_010892726.1">
    <property type="nucleotide sequence ID" value="NC_002488.3"/>
</dbReference>
<dbReference type="SMR" id="Q9PGW5"/>
<dbReference type="STRING" id="160492.XF_0183"/>
<dbReference type="KEGG" id="xfa:XF_0183"/>
<dbReference type="eggNOG" id="COG0404">
    <property type="taxonomic scope" value="Bacteria"/>
</dbReference>
<dbReference type="HOGENOM" id="CLU_007884_10_2_6"/>
<dbReference type="Proteomes" id="UP000000812">
    <property type="component" value="Chromosome"/>
</dbReference>
<dbReference type="GO" id="GO:0005829">
    <property type="term" value="C:cytosol"/>
    <property type="evidence" value="ECO:0007669"/>
    <property type="project" value="TreeGrafter"/>
</dbReference>
<dbReference type="GO" id="GO:0005960">
    <property type="term" value="C:glycine cleavage complex"/>
    <property type="evidence" value="ECO:0007669"/>
    <property type="project" value="InterPro"/>
</dbReference>
<dbReference type="GO" id="GO:0004047">
    <property type="term" value="F:aminomethyltransferase activity"/>
    <property type="evidence" value="ECO:0007669"/>
    <property type="project" value="UniProtKB-UniRule"/>
</dbReference>
<dbReference type="GO" id="GO:0008483">
    <property type="term" value="F:transaminase activity"/>
    <property type="evidence" value="ECO:0007669"/>
    <property type="project" value="UniProtKB-KW"/>
</dbReference>
<dbReference type="GO" id="GO:0019464">
    <property type="term" value="P:glycine decarboxylation via glycine cleavage system"/>
    <property type="evidence" value="ECO:0007669"/>
    <property type="project" value="UniProtKB-UniRule"/>
</dbReference>
<dbReference type="FunFam" id="3.30.70.1400:FF:000001">
    <property type="entry name" value="Aminomethyltransferase"/>
    <property type="match status" value="1"/>
</dbReference>
<dbReference type="FunFam" id="4.10.1250.10:FF:000001">
    <property type="entry name" value="Aminomethyltransferase"/>
    <property type="match status" value="1"/>
</dbReference>
<dbReference type="Gene3D" id="2.40.30.110">
    <property type="entry name" value="Aminomethyltransferase beta-barrel domains"/>
    <property type="match status" value="1"/>
</dbReference>
<dbReference type="Gene3D" id="3.30.70.1400">
    <property type="entry name" value="Aminomethyltransferase beta-barrel domains"/>
    <property type="match status" value="1"/>
</dbReference>
<dbReference type="Gene3D" id="4.10.1250.10">
    <property type="entry name" value="Aminomethyltransferase fragment"/>
    <property type="match status" value="1"/>
</dbReference>
<dbReference type="Gene3D" id="3.30.1360.120">
    <property type="entry name" value="Probable tRNA modification gtpase trme, domain 1"/>
    <property type="match status" value="1"/>
</dbReference>
<dbReference type="HAMAP" id="MF_00259">
    <property type="entry name" value="GcvT"/>
    <property type="match status" value="1"/>
</dbReference>
<dbReference type="InterPro" id="IPR006223">
    <property type="entry name" value="GCS_T"/>
</dbReference>
<dbReference type="InterPro" id="IPR022903">
    <property type="entry name" value="GCS_T_bac"/>
</dbReference>
<dbReference type="InterPro" id="IPR013977">
    <property type="entry name" value="GCST_C"/>
</dbReference>
<dbReference type="InterPro" id="IPR006222">
    <property type="entry name" value="GCV_T_N"/>
</dbReference>
<dbReference type="InterPro" id="IPR028896">
    <property type="entry name" value="GcvT/YgfZ/DmdA"/>
</dbReference>
<dbReference type="InterPro" id="IPR029043">
    <property type="entry name" value="GcvT/YgfZ_C"/>
</dbReference>
<dbReference type="InterPro" id="IPR027266">
    <property type="entry name" value="TrmE/GcvT_dom1"/>
</dbReference>
<dbReference type="NCBIfam" id="TIGR00528">
    <property type="entry name" value="gcvT"/>
    <property type="match status" value="1"/>
</dbReference>
<dbReference type="NCBIfam" id="NF001567">
    <property type="entry name" value="PRK00389.1"/>
    <property type="match status" value="1"/>
</dbReference>
<dbReference type="PANTHER" id="PTHR43757">
    <property type="entry name" value="AMINOMETHYLTRANSFERASE"/>
    <property type="match status" value="1"/>
</dbReference>
<dbReference type="PANTHER" id="PTHR43757:SF2">
    <property type="entry name" value="AMINOMETHYLTRANSFERASE, MITOCHONDRIAL"/>
    <property type="match status" value="1"/>
</dbReference>
<dbReference type="Pfam" id="PF01571">
    <property type="entry name" value="GCV_T"/>
    <property type="match status" value="1"/>
</dbReference>
<dbReference type="Pfam" id="PF08669">
    <property type="entry name" value="GCV_T_C"/>
    <property type="match status" value="1"/>
</dbReference>
<dbReference type="PIRSF" id="PIRSF006487">
    <property type="entry name" value="GcvT"/>
    <property type="match status" value="1"/>
</dbReference>
<dbReference type="SUPFAM" id="SSF101790">
    <property type="entry name" value="Aminomethyltransferase beta-barrel domain"/>
    <property type="match status" value="1"/>
</dbReference>
<dbReference type="SUPFAM" id="SSF103025">
    <property type="entry name" value="Folate-binding domain"/>
    <property type="match status" value="1"/>
</dbReference>
<reference key="1">
    <citation type="journal article" date="2000" name="Nature">
        <title>The genome sequence of the plant pathogen Xylella fastidiosa.</title>
        <authorList>
            <person name="Simpson A.J.G."/>
            <person name="Reinach F.C."/>
            <person name="Arruda P."/>
            <person name="Abreu F.A."/>
            <person name="Acencio M."/>
            <person name="Alvarenga R."/>
            <person name="Alves L.M.C."/>
            <person name="Araya J.E."/>
            <person name="Baia G.S."/>
            <person name="Baptista C.S."/>
            <person name="Barros M.H."/>
            <person name="Bonaccorsi E.D."/>
            <person name="Bordin S."/>
            <person name="Bove J.M."/>
            <person name="Briones M.R.S."/>
            <person name="Bueno M.R.P."/>
            <person name="Camargo A.A."/>
            <person name="Camargo L.E.A."/>
            <person name="Carraro D.M."/>
            <person name="Carrer H."/>
            <person name="Colauto N.B."/>
            <person name="Colombo C."/>
            <person name="Costa F.F."/>
            <person name="Costa M.C.R."/>
            <person name="Costa-Neto C.M."/>
            <person name="Coutinho L.L."/>
            <person name="Cristofani M."/>
            <person name="Dias-Neto E."/>
            <person name="Docena C."/>
            <person name="El-Dorry H."/>
            <person name="Facincani A.P."/>
            <person name="Ferreira A.J.S."/>
            <person name="Ferreira V.C.A."/>
            <person name="Ferro J.A."/>
            <person name="Fraga J.S."/>
            <person name="Franca S.C."/>
            <person name="Franco M.C."/>
            <person name="Frohme M."/>
            <person name="Furlan L.R."/>
            <person name="Garnier M."/>
            <person name="Goldman G.H."/>
            <person name="Goldman M.H.S."/>
            <person name="Gomes S.L."/>
            <person name="Gruber A."/>
            <person name="Ho P.L."/>
            <person name="Hoheisel J.D."/>
            <person name="Junqueira M.L."/>
            <person name="Kemper E.L."/>
            <person name="Kitajima J.P."/>
            <person name="Krieger J.E."/>
            <person name="Kuramae E.E."/>
            <person name="Laigret F."/>
            <person name="Lambais M.R."/>
            <person name="Leite L.C.C."/>
            <person name="Lemos E.G.M."/>
            <person name="Lemos M.V.F."/>
            <person name="Lopes S.A."/>
            <person name="Lopes C.R."/>
            <person name="Machado J.A."/>
            <person name="Machado M.A."/>
            <person name="Madeira A.M.B.N."/>
            <person name="Madeira H.M.F."/>
            <person name="Marino C.L."/>
            <person name="Marques M.V."/>
            <person name="Martins E.A.L."/>
            <person name="Martins E.M.F."/>
            <person name="Matsukuma A.Y."/>
            <person name="Menck C.F.M."/>
            <person name="Miracca E.C."/>
            <person name="Miyaki C.Y."/>
            <person name="Monteiro-Vitorello C.B."/>
            <person name="Moon D.H."/>
            <person name="Nagai M.A."/>
            <person name="Nascimento A.L.T.O."/>
            <person name="Netto L.E.S."/>
            <person name="Nhani A. Jr."/>
            <person name="Nobrega F.G."/>
            <person name="Nunes L.R."/>
            <person name="Oliveira M.A."/>
            <person name="de Oliveira M.C."/>
            <person name="de Oliveira R.C."/>
            <person name="Palmieri D.A."/>
            <person name="Paris A."/>
            <person name="Peixoto B.R."/>
            <person name="Pereira G.A.G."/>
            <person name="Pereira H.A. Jr."/>
            <person name="Pesquero J.B."/>
            <person name="Quaggio R.B."/>
            <person name="Roberto P.G."/>
            <person name="Rodrigues V."/>
            <person name="de Rosa A.J.M."/>
            <person name="de Rosa V.E. Jr."/>
            <person name="de Sa R.G."/>
            <person name="Santelli R.V."/>
            <person name="Sawasaki H.E."/>
            <person name="da Silva A.C.R."/>
            <person name="da Silva A.M."/>
            <person name="da Silva F.R."/>
            <person name="Silva W.A. Jr."/>
            <person name="da Silveira J.F."/>
            <person name="Silvestri M.L.Z."/>
            <person name="Siqueira W.J."/>
            <person name="de Souza A.A."/>
            <person name="de Souza A.P."/>
            <person name="Terenzi M.F."/>
            <person name="Truffi D."/>
            <person name="Tsai S.M."/>
            <person name="Tsuhako M.H."/>
            <person name="Vallada H."/>
            <person name="Van Sluys M.A."/>
            <person name="Verjovski-Almeida S."/>
            <person name="Vettore A.L."/>
            <person name="Zago M.A."/>
            <person name="Zatz M."/>
            <person name="Meidanis J."/>
            <person name="Setubal J.C."/>
        </authorList>
    </citation>
    <scope>NUCLEOTIDE SEQUENCE [LARGE SCALE GENOMIC DNA]</scope>
    <source>
        <strain>9a5c</strain>
    </source>
</reference>
<organism>
    <name type="scientific">Xylella fastidiosa (strain 9a5c)</name>
    <dbReference type="NCBI Taxonomy" id="160492"/>
    <lineage>
        <taxon>Bacteria</taxon>
        <taxon>Pseudomonadati</taxon>
        <taxon>Pseudomonadota</taxon>
        <taxon>Gammaproteobacteria</taxon>
        <taxon>Lysobacterales</taxon>
        <taxon>Lysobacteraceae</taxon>
        <taxon>Xylella</taxon>
    </lineage>
</organism>
<evidence type="ECO:0000255" key="1">
    <source>
        <dbReference type="HAMAP-Rule" id="MF_00259"/>
    </source>
</evidence>
<keyword id="KW-0032">Aminotransferase</keyword>
<keyword id="KW-0808">Transferase</keyword>
<proteinExistence type="inferred from homology"/>
<feature type="chain" id="PRO_0000122616" description="Aminomethyltransferase">
    <location>
        <begin position="1"/>
        <end position="368"/>
    </location>
</feature>
<gene>
    <name evidence="1" type="primary">gcvT</name>
    <name type="ordered locus">XF_0183</name>
</gene>
<protein>
    <recommendedName>
        <fullName evidence="1">Aminomethyltransferase</fullName>
        <ecNumber evidence="1">2.1.2.10</ecNumber>
    </recommendedName>
    <alternativeName>
        <fullName evidence="1">Glycine cleavage system T protein</fullName>
    </alternativeName>
</protein>
<sequence length="368" mass="41148">MIKKTILNDTHRALGAKMVDFSGWEMPIHYGSQIDEHHHVRRNAGIFDVSHMTVIDLHGTQVRPLLRRLLANSVDKLKVPGKALYSCMLNPQGGVIDDLIVYYLREDYFRFIVNAATREKDLAWINTQASAFNVRVEERADLAMLAVQGPAARAQVTNLLAETHRDAVEKLGRFAALEVASHSKKILFISRTGYTGEDGFEILLPQEETITLWNALLKTGVKPIGLGARDTLRLEAGMNLYGQDMDEQVSPYEAALGWTVMLDEGRNFIGRNVLEQQKTNGVSRQMIGLLMDEKGVLRHGQKVLTAQGEGHILSGTFSPTLNKAIGFARVPAGKPSEVRVNIRDREIPVRVVRFPFVREGQTQPNIFD</sequence>
<accession>Q9PGW5</accession>